<reference key="1">
    <citation type="journal article" date="2005" name="Proc. Natl. Acad. Sci. U.S.A.">
        <title>Evolutionary conservation and diversification of Rh family genes and proteins.</title>
        <authorList>
            <person name="Huang C.-H."/>
            <person name="Peng J."/>
        </authorList>
    </citation>
    <scope>NUCLEOTIDE SEQUENCE [MRNA]</scope>
    <source>
        <strain>AX2</strain>
    </source>
</reference>
<reference key="2">
    <citation type="journal article" date="2005" name="Nature">
        <title>The genome of the social amoeba Dictyostelium discoideum.</title>
        <authorList>
            <person name="Eichinger L."/>
            <person name="Pachebat J.A."/>
            <person name="Gloeckner G."/>
            <person name="Rajandream M.A."/>
            <person name="Sucgang R."/>
            <person name="Berriman M."/>
            <person name="Song J."/>
            <person name="Olsen R."/>
            <person name="Szafranski K."/>
            <person name="Xu Q."/>
            <person name="Tunggal B."/>
            <person name="Kummerfeld S."/>
            <person name="Madera M."/>
            <person name="Konfortov B.A."/>
            <person name="Rivero F."/>
            <person name="Bankier A.T."/>
            <person name="Lehmann R."/>
            <person name="Hamlin N."/>
            <person name="Davies R."/>
            <person name="Gaudet P."/>
            <person name="Fey P."/>
            <person name="Pilcher K."/>
            <person name="Chen G."/>
            <person name="Saunders D."/>
            <person name="Sodergren E.J."/>
            <person name="Davis P."/>
            <person name="Kerhornou A."/>
            <person name="Nie X."/>
            <person name="Hall N."/>
            <person name="Anjard C."/>
            <person name="Hemphill L."/>
            <person name="Bason N."/>
            <person name="Farbrother P."/>
            <person name="Desany B."/>
            <person name="Just E."/>
            <person name="Morio T."/>
            <person name="Rost R."/>
            <person name="Churcher C.M."/>
            <person name="Cooper J."/>
            <person name="Haydock S."/>
            <person name="van Driessche N."/>
            <person name="Cronin A."/>
            <person name="Goodhead I."/>
            <person name="Muzny D.M."/>
            <person name="Mourier T."/>
            <person name="Pain A."/>
            <person name="Lu M."/>
            <person name="Harper D."/>
            <person name="Lindsay R."/>
            <person name="Hauser H."/>
            <person name="James K.D."/>
            <person name="Quiles M."/>
            <person name="Madan Babu M."/>
            <person name="Saito T."/>
            <person name="Buchrieser C."/>
            <person name="Wardroper A."/>
            <person name="Felder M."/>
            <person name="Thangavelu M."/>
            <person name="Johnson D."/>
            <person name="Knights A."/>
            <person name="Loulseged H."/>
            <person name="Mungall K.L."/>
            <person name="Oliver K."/>
            <person name="Price C."/>
            <person name="Quail M.A."/>
            <person name="Urushihara H."/>
            <person name="Hernandez J."/>
            <person name="Rabbinowitsch E."/>
            <person name="Steffen D."/>
            <person name="Sanders M."/>
            <person name="Ma J."/>
            <person name="Kohara Y."/>
            <person name="Sharp S."/>
            <person name="Simmonds M.N."/>
            <person name="Spiegler S."/>
            <person name="Tivey A."/>
            <person name="Sugano S."/>
            <person name="White B."/>
            <person name="Walker D."/>
            <person name="Woodward J.R."/>
            <person name="Winckler T."/>
            <person name="Tanaka Y."/>
            <person name="Shaulsky G."/>
            <person name="Schleicher M."/>
            <person name="Weinstock G.M."/>
            <person name="Rosenthal A."/>
            <person name="Cox E.C."/>
            <person name="Chisholm R.L."/>
            <person name="Gibbs R.A."/>
            <person name="Loomis W.F."/>
            <person name="Platzer M."/>
            <person name="Kay R.R."/>
            <person name="Williams J.G."/>
            <person name="Dear P.H."/>
            <person name="Noegel A.A."/>
            <person name="Barrell B.G."/>
            <person name="Kuspa A."/>
        </authorList>
    </citation>
    <scope>NUCLEOTIDE SEQUENCE [LARGE SCALE GENOMIC DNA]</scope>
    <source>
        <strain>AX4</strain>
    </source>
</reference>
<comment type="function">
    <text evidence="1">May be a carbon dioxide/bicarbonate transporter.</text>
</comment>
<comment type="subcellular location">
    <subcellularLocation>
        <location evidence="4">Membrane</location>
        <topology evidence="4">Multi-pass membrane protein</topology>
    </subcellularLocation>
</comment>
<comment type="similarity">
    <text evidence="4">Belongs to the ammonium transporter (TC 2.A.49) family. Rh subfamily.</text>
</comment>
<keyword id="KW-0325">Glycoprotein</keyword>
<keyword id="KW-0472">Membrane</keyword>
<keyword id="KW-1185">Reference proteome</keyword>
<keyword id="KW-0812">Transmembrane</keyword>
<keyword id="KW-1133">Transmembrane helix</keyword>
<keyword id="KW-0813">Transport</keyword>
<sequence length="600" mass="66958">MSKDEHKLPLSKRKESIIFMMILFAFQVFMVVLFSVWVRYSKNEVNYSTLTPEQLQELEATGGVVQEEVTNIYGYFRDINIMIFFGFGFLMTFLRRYGYSALGYTFIISALVAQWSVLIYGFFETVDHKNDHGGDYASTFEMSQTVLLQGLFCAGAVMISYGAVLGRVTPLQMLVVGIFEPIFYFLNMFIGEMNLEAIDVGGGMYIHLFGSVFGLTIAWFLTDKKSKDCEDNSPSYTGDYFAMAGTLFLWMMWPSFNAAIAPLGEPQFRAIANTFLSLTASTIATFIVTRLFGHLGHKIDMVHVQNSSLAGGVVQGCLAHMNINPGGAIGMGFLAGVISVIGYLFISPFLQRRFNIQDTCGIHNLHFMPGFIGSIAACIAAWKGLNDRSLYNPIEFNQIFRAGEDQARNNAAATFISIGIAIAGGLFVGMILKALKKVGGLKAKQYYQDSAFWHVPIDYPKDVEYVVEQNNLPMPTTDNGDNVVGGGVEMKKHNNNNNKKENGYRRDLIRLLETLVRNEQSTDSSYSDSDSSDEEEKERRIRKLAKKSYRRSKKSHSEHQPQHQPEESTFNNNNNNNNNNATAETTDNGGSSTNSPTSKV</sequence>
<name>RHGB_DICDI</name>
<proteinExistence type="evidence at transcript level"/>
<feature type="chain" id="PRO_0000390405" description="Rhesus-like glycoprotein B">
    <location>
        <begin position="1"/>
        <end position="600"/>
    </location>
</feature>
<feature type="topological domain" description="Cytoplasmic" evidence="2">
    <location>
        <begin position="1"/>
        <end position="16"/>
    </location>
</feature>
<feature type="transmembrane region" description="Helical" evidence="2">
    <location>
        <begin position="17"/>
        <end position="37"/>
    </location>
</feature>
<feature type="topological domain" description="Extracellular" evidence="2">
    <location>
        <begin position="38"/>
        <end position="73"/>
    </location>
</feature>
<feature type="transmembrane region" description="Helical" evidence="2">
    <location>
        <begin position="74"/>
        <end position="94"/>
    </location>
</feature>
<feature type="topological domain" description="Cytoplasmic" evidence="2">
    <location>
        <begin position="95"/>
        <end position="102"/>
    </location>
</feature>
<feature type="transmembrane region" description="Helical" evidence="2">
    <location>
        <begin position="103"/>
        <end position="123"/>
    </location>
</feature>
<feature type="topological domain" description="Extracellular" evidence="2">
    <location>
        <begin position="124"/>
        <end position="145"/>
    </location>
</feature>
<feature type="transmembrane region" description="Helical" evidence="2">
    <location>
        <begin position="146"/>
        <end position="166"/>
    </location>
</feature>
<feature type="topological domain" description="Cytoplasmic" evidence="2">
    <location>
        <begin position="167"/>
        <end position="170"/>
    </location>
</feature>
<feature type="transmembrane region" description="Helical" evidence="2">
    <location>
        <begin position="171"/>
        <end position="191"/>
    </location>
</feature>
<feature type="topological domain" description="Extracellular" evidence="2">
    <location>
        <begin position="192"/>
        <end position="199"/>
    </location>
</feature>
<feature type="transmembrane region" description="Helical" evidence="2">
    <location>
        <begin position="200"/>
        <end position="220"/>
    </location>
</feature>
<feature type="topological domain" description="Cytoplasmic" evidence="2">
    <location>
        <begin position="221"/>
        <end position="240"/>
    </location>
</feature>
<feature type="transmembrane region" description="Helical" evidence="2">
    <location>
        <begin position="241"/>
        <end position="261"/>
    </location>
</feature>
<feature type="topological domain" description="Extracellular" evidence="2">
    <location>
        <begin position="262"/>
        <end position="274"/>
    </location>
</feature>
<feature type="transmembrane region" description="Helical" evidence="2">
    <location>
        <begin position="275"/>
        <end position="295"/>
    </location>
</feature>
<feature type="topological domain" description="Cytoplasmic" evidence="2">
    <location>
        <begin position="296"/>
        <end position="303"/>
    </location>
</feature>
<feature type="transmembrane region" description="Helical" evidence="2">
    <location>
        <begin position="304"/>
        <end position="323"/>
    </location>
</feature>
<feature type="topological domain" description="Extracellular" evidence="2">
    <location>
        <begin position="324"/>
        <end position="325"/>
    </location>
</feature>
<feature type="transmembrane region" description="Helical" evidence="2">
    <location>
        <begin position="326"/>
        <end position="346"/>
    </location>
</feature>
<feature type="topological domain" description="Cytoplasmic" evidence="2">
    <location>
        <begin position="347"/>
        <end position="361"/>
    </location>
</feature>
<feature type="transmembrane region" description="Helical" evidence="2">
    <location>
        <begin position="362"/>
        <end position="382"/>
    </location>
</feature>
<feature type="topological domain" description="Extracellular" evidence="2">
    <location>
        <begin position="383"/>
        <end position="411"/>
    </location>
</feature>
<feature type="transmembrane region" description="Helical" evidence="2">
    <location>
        <begin position="412"/>
        <end position="432"/>
    </location>
</feature>
<feature type="topological domain" description="Cytoplasmic" evidence="2">
    <location>
        <begin position="433"/>
        <end position="600"/>
    </location>
</feature>
<feature type="region of interest" description="Disordered" evidence="3">
    <location>
        <begin position="471"/>
        <end position="600"/>
    </location>
</feature>
<feature type="compositionally biased region" description="Basic and acidic residues" evidence="3">
    <location>
        <begin position="498"/>
        <end position="510"/>
    </location>
</feature>
<feature type="compositionally biased region" description="Low complexity" evidence="3">
    <location>
        <begin position="519"/>
        <end position="529"/>
    </location>
</feature>
<feature type="compositionally biased region" description="Basic residues" evidence="3">
    <location>
        <begin position="540"/>
        <end position="554"/>
    </location>
</feature>
<feature type="compositionally biased region" description="Basic and acidic residues" evidence="3">
    <location>
        <begin position="555"/>
        <end position="566"/>
    </location>
</feature>
<feature type="compositionally biased region" description="Low complexity" evidence="3">
    <location>
        <begin position="571"/>
        <end position="580"/>
    </location>
</feature>
<feature type="compositionally biased region" description="Polar residues" evidence="3">
    <location>
        <begin position="581"/>
        <end position="600"/>
    </location>
</feature>
<feature type="glycosylation site" description="N-linked (GlcNAc...) asparagine" evidence="2">
    <location>
        <position position="46"/>
    </location>
</feature>
<accession>Q8I0L6</accession>
<accession>Q54VL4</accession>
<dbReference type="EMBL" id="AF447924">
    <property type="protein sequence ID" value="AAN76727.1"/>
    <property type="molecule type" value="mRNA"/>
</dbReference>
<dbReference type="EMBL" id="AF447925">
    <property type="protein sequence ID" value="AAN76728.1"/>
    <property type="molecule type" value="mRNA"/>
</dbReference>
<dbReference type="EMBL" id="AAFI02000035">
    <property type="protein sequence ID" value="EAL67256.1"/>
    <property type="molecule type" value="Genomic_DNA"/>
</dbReference>
<dbReference type="RefSeq" id="XP_641341.1">
    <property type="nucleotide sequence ID" value="XM_636249.1"/>
</dbReference>
<dbReference type="SMR" id="Q8I0L6"/>
<dbReference type="FunCoup" id="Q8I0L6">
    <property type="interactions" value="1"/>
</dbReference>
<dbReference type="STRING" id="44689.Q8I0L6"/>
<dbReference type="GlyCosmos" id="Q8I0L6">
    <property type="glycosylation" value="1 site, No reported glycans"/>
</dbReference>
<dbReference type="GlyGen" id="Q8I0L6">
    <property type="glycosylation" value="1 site"/>
</dbReference>
<dbReference type="PaxDb" id="44689-DDB0214831"/>
<dbReference type="EnsemblProtists" id="EAL67256">
    <property type="protein sequence ID" value="EAL67256"/>
    <property type="gene ID" value="DDB_G0280059"/>
</dbReference>
<dbReference type="GeneID" id="8622475"/>
<dbReference type="KEGG" id="ddi:DDB_G0280059"/>
<dbReference type="dictyBase" id="DDB_G0280059">
    <property type="gene designation" value="rhgB"/>
</dbReference>
<dbReference type="VEuPathDB" id="AmoebaDB:DDB_G0280059"/>
<dbReference type="eggNOG" id="KOG3796">
    <property type="taxonomic scope" value="Eukaryota"/>
</dbReference>
<dbReference type="HOGENOM" id="CLU_021386_1_0_1"/>
<dbReference type="InParanoid" id="Q8I0L6"/>
<dbReference type="OMA" id="NCFEDDV"/>
<dbReference type="PhylomeDB" id="Q8I0L6"/>
<dbReference type="Reactome" id="R-DDI-1237044">
    <property type="pathway name" value="Erythrocytes take up carbon dioxide and release oxygen"/>
</dbReference>
<dbReference type="Reactome" id="R-DDI-1247673">
    <property type="pathway name" value="Erythrocytes take up oxygen and release carbon dioxide"/>
</dbReference>
<dbReference type="Reactome" id="R-DDI-444411">
    <property type="pathway name" value="Rhesus glycoproteins mediate ammonium transport"/>
</dbReference>
<dbReference type="PRO" id="PR:Q8I0L6"/>
<dbReference type="Proteomes" id="UP000002195">
    <property type="component" value="Chromosome 3"/>
</dbReference>
<dbReference type="GO" id="GO:0005886">
    <property type="term" value="C:plasma membrane"/>
    <property type="evidence" value="ECO:0000318"/>
    <property type="project" value="GO_Central"/>
</dbReference>
<dbReference type="GO" id="GO:0008519">
    <property type="term" value="F:ammonium channel activity"/>
    <property type="evidence" value="ECO:0000250"/>
    <property type="project" value="dictyBase"/>
</dbReference>
<dbReference type="GO" id="GO:0097272">
    <property type="term" value="P:ammonium homeostasis"/>
    <property type="evidence" value="ECO:0000318"/>
    <property type="project" value="GO_Central"/>
</dbReference>
<dbReference type="GO" id="GO:0072488">
    <property type="term" value="P:ammonium transmembrane transport"/>
    <property type="evidence" value="ECO:0000250"/>
    <property type="project" value="dictyBase"/>
</dbReference>
<dbReference type="FunFam" id="1.10.3430.10:FF:000018">
    <property type="entry name" value="Rhesus-like glycoprotein B"/>
    <property type="match status" value="1"/>
</dbReference>
<dbReference type="Gene3D" id="1.10.3430.10">
    <property type="entry name" value="Ammonium transporter AmtB like domains"/>
    <property type="match status" value="1"/>
</dbReference>
<dbReference type="InterPro" id="IPR029020">
    <property type="entry name" value="Ammonium/urea_transptr"/>
</dbReference>
<dbReference type="InterPro" id="IPR024041">
    <property type="entry name" value="NH4_transpt_AmtB-like_dom"/>
</dbReference>
<dbReference type="InterPro" id="IPR002229">
    <property type="entry name" value="RhesusRHD"/>
</dbReference>
<dbReference type="PANTHER" id="PTHR11730">
    <property type="entry name" value="AMMONIUM TRANSPORTER"/>
    <property type="match status" value="1"/>
</dbReference>
<dbReference type="PANTHER" id="PTHR11730:SF60">
    <property type="entry name" value="RH50, ISOFORM D"/>
    <property type="match status" value="1"/>
</dbReference>
<dbReference type="Pfam" id="PF00909">
    <property type="entry name" value="Ammonium_transp"/>
    <property type="match status" value="1"/>
</dbReference>
<dbReference type="PRINTS" id="PR00342">
    <property type="entry name" value="RHESUSRHD"/>
</dbReference>
<dbReference type="SUPFAM" id="SSF111352">
    <property type="entry name" value="Ammonium transporter"/>
    <property type="match status" value="1"/>
</dbReference>
<gene>
    <name type="primary">rhgB</name>
    <name type="ORF">DDB_G0280059</name>
</gene>
<evidence type="ECO:0000250" key="1"/>
<evidence type="ECO:0000255" key="2"/>
<evidence type="ECO:0000256" key="3">
    <source>
        <dbReference type="SAM" id="MobiDB-lite"/>
    </source>
</evidence>
<evidence type="ECO:0000305" key="4"/>
<organism>
    <name type="scientific">Dictyostelium discoideum</name>
    <name type="common">Social amoeba</name>
    <dbReference type="NCBI Taxonomy" id="44689"/>
    <lineage>
        <taxon>Eukaryota</taxon>
        <taxon>Amoebozoa</taxon>
        <taxon>Evosea</taxon>
        <taxon>Eumycetozoa</taxon>
        <taxon>Dictyostelia</taxon>
        <taxon>Dictyosteliales</taxon>
        <taxon>Dictyosteliaceae</taxon>
        <taxon>Dictyostelium</taxon>
    </lineage>
</organism>
<protein>
    <recommendedName>
        <fullName>Rhesus-like glycoprotein B</fullName>
    </recommendedName>
    <alternativeName>
        <fullName>Rh50-like protein rhgB</fullName>
    </alternativeName>
</protein>